<dbReference type="EMBL" id="AF200686">
    <property type="protein sequence ID" value="AAF22649.1"/>
    <property type="molecule type" value="mRNA"/>
</dbReference>
<dbReference type="EMBL" id="AF525673">
    <property type="protein sequence ID" value="AAM82610.1"/>
    <property type="molecule type" value="Genomic_DNA"/>
</dbReference>
<dbReference type="EMBL" id="EU073490">
    <property type="protein sequence ID" value="ABU80069.1"/>
    <property type="molecule type" value="Genomic_DNA"/>
</dbReference>
<dbReference type="EMBL" id="EU073491">
    <property type="protein sequence ID" value="ABU80070.1"/>
    <property type="molecule type" value="Genomic_DNA"/>
</dbReference>
<dbReference type="EMBL" id="EU073492">
    <property type="protein sequence ID" value="ABU80071.1"/>
    <property type="molecule type" value="Genomic_DNA"/>
</dbReference>
<dbReference type="EMBL" id="EU073493">
    <property type="protein sequence ID" value="ABU80072.1"/>
    <property type="molecule type" value="Genomic_DNA"/>
</dbReference>
<dbReference type="EMBL" id="EU073494">
    <property type="protein sequence ID" value="ABU80073.1"/>
    <property type="molecule type" value="Genomic_DNA"/>
</dbReference>
<dbReference type="EMBL" id="EU073495">
    <property type="protein sequence ID" value="ABU80074.1"/>
    <property type="molecule type" value="Genomic_DNA"/>
</dbReference>
<dbReference type="EMBL" id="EU073496">
    <property type="protein sequence ID" value="ABU80075.1"/>
    <property type="molecule type" value="Genomic_DNA"/>
</dbReference>
<dbReference type="EMBL" id="EU073497">
    <property type="protein sequence ID" value="ABU80076.1"/>
    <property type="molecule type" value="Genomic_DNA"/>
</dbReference>
<dbReference type="EMBL" id="EU073498">
    <property type="protein sequence ID" value="ABU80077.1"/>
    <property type="molecule type" value="Genomic_DNA"/>
</dbReference>
<dbReference type="EMBL" id="EU073499">
    <property type="protein sequence ID" value="ABU80078.1"/>
    <property type="molecule type" value="Genomic_DNA"/>
</dbReference>
<dbReference type="EMBL" id="EU073500">
    <property type="protein sequence ID" value="ABU80079.1"/>
    <property type="molecule type" value="Genomic_DNA"/>
</dbReference>
<dbReference type="EMBL" id="EU073501">
    <property type="protein sequence ID" value="ABU80080.1"/>
    <property type="molecule type" value="Genomic_DNA"/>
</dbReference>
<dbReference type="EMBL" id="EU073502">
    <property type="protein sequence ID" value="ABU80081.1"/>
    <property type="molecule type" value="Genomic_DNA"/>
</dbReference>
<dbReference type="EMBL" id="EU073503">
    <property type="protein sequence ID" value="ABU80082.1"/>
    <property type="molecule type" value="Genomic_DNA"/>
</dbReference>
<dbReference type="EMBL" id="EU073504">
    <property type="protein sequence ID" value="ABU80083.1"/>
    <property type="molecule type" value="Genomic_DNA"/>
</dbReference>
<dbReference type="EMBL" id="EU073505">
    <property type="protein sequence ID" value="ABU80084.1"/>
    <property type="molecule type" value="Genomic_DNA"/>
</dbReference>
<dbReference type="EMBL" id="EU073506">
    <property type="protein sequence ID" value="ABU80085.1"/>
    <property type="molecule type" value="Genomic_DNA"/>
</dbReference>
<dbReference type="EMBL" id="EU073507">
    <property type="protein sequence ID" value="ABU80086.1"/>
    <property type="molecule type" value="Genomic_DNA"/>
</dbReference>
<dbReference type="EMBL" id="EU073508">
    <property type="protein sequence ID" value="ABU80087.1"/>
    <property type="molecule type" value="Genomic_DNA"/>
</dbReference>
<dbReference type="EMBL" id="EU073509">
    <property type="protein sequence ID" value="ABU80088.1"/>
    <property type="molecule type" value="Genomic_DNA"/>
</dbReference>
<dbReference type="EMBL" id="EU073510">
    <property type="protein sequence ID" value="ABU80089.1"/>
    <property type="molecule type" value="Genomic_DNA"/>
</dbReference>
<dbReference type="EMBL" id="EU073511">
    <property type="protein sequence ID" value="ABU80090.1"/>
    <property type="molecule type" value="Genomic_DNA"/>
</dbReference>
<dbReference type="EMBL" id="AAAB01008847">
    <property type="protein sequence ID" value="EAA06858.2"/>
    <property type="molecule type" value="Genomic_DNA"/>
</dbReference>
<dbReference type="SMR" id="P82290"/>
<dbReference type="FunCoup" id="P82290">
    <property type="interactions" value="106"/>
</dbReference>
<dbReference type="STRING" id="7165.P82290"/>
<dbReference type="PaxDb" id="7165-AGAP000693-PA"/>
<dbReference type="EnsemblMetazoa" id="AGAP000693-RA">
    <property type="protein sequence ID" value="AGAP000693-PA"/>
    <property type="gene ID" value="AGAP000693"/>
</dbReference>
<dbReference type="GeneID" id="1272403"/>
<dbReference type="KEGG" id="aga:1272403"/>
<dbReference type="VEuPathDB" id="VectorBase:AGAMI1_013976"/>
<dbReference type="VEuPathDB" id="VectorBase:AGAP000693"/>
<dbReference type="eggNOG" id="ENOG502T8YY">
    <property type="taxonomic scope" value="Eukaryota"/>
</dbReference>
<dbReference type="HOGENOM" id="CLU_187909_1_1_1"/>
<dbReference type="InParanoid" id="P82290"/>
<dbReference type="OMA" id="MKFNYVF"/>
<dbReference type="PhylomeDB" id="P82290"/>
<dbReference type="Proteomes" id="UP000007062">
    <property type="component" value="Chromosome X"/>
</dbReference>
<dbReference type="GO" id="GO:0005615">
    <property type="term" value="C:extracellular space"/>
    <property type="evidence" value="ECO:0000318"/>
    <property type="project" value="GO_Central"/>
</dbReference>
<dbReference type="GO" id="GO:0019731">
    <property type="term" value="P:antibacterial humoral response"/>
    <property type="evidence" value="ECO:0000318"/>
    <property type="project" value="GO_Central"/>
</dbReference>
<dbReference type="GO" id="GO:0050832">
    <property type="term" value="P:defense response to fungus"/>
    <property type="evidence" value="ECO:0007669"/>
    <property type="project" value="UniProtKB-KW"/>
</dbReference>
<dbReference type="GO" id="GO:0050829">
    <property type="term" value="P:defense response to Gram-negative bacterium"/>
    <property type="evidence" value="ECO:0000318"/>
    <property type="project" value="GO_Central"/>
</dbReference>
<dbReference type="GO" id="GO:0050830">
    <property type="term" value="P:defense response to Gram-positive bacterium"/>
    <property type="evidence" value="ECO:0000318"/>
    <property type="project" value="GO_Central"/>
</dbReference>
<dbReference type="GO" id="GO:0045087">
    <property type="term" value="P:innate immune response"/>
    <property type="evidence" value="ECO:0007669"/>
    <property type="project" value="UniProtKB-KW"/>
</dbReference>
<dbReference type="GO" id="GO:0031640">
    <property type="term" value="P:killing of cells of another organism"/>
    <property type="evidence" value="ECO:0007669"/>
    <property type="project" value="UniProtKB-KW"/>
</dbReference>
<dbReference type="InterPro" id="IPR000875">
    <property type="entry name" value="Cecropin"/>
</dbReference>
<dbReference type="InterPro" id="IPR020400">
    <property type="entry name" value="Cecropin_insect"/>
</dbReference>
<dbReference type="PANTHER" id="PTHR38329">
    <property type="entry name" value="CECROPIN-A1-RELATED"/>
    <property type="match status" value="1"/>
</dbReference>
<dbReference type="PANTHER" id="PTHR38329:SF1">
    <property type="entry name" value="CECROPIN-A1-RELATED"/>
    <property type="match status" value="1"/>
</dbReference>
<dbReference type="Pfam" id="PF00272">
    <property type="entry name" value="Cecropin"/>
    <property type="match status" value="1"/>
</dbReference>
<protein>
    <recommendedName>
        <fullName>Cecropin-A</fullName>
    </recommendedName>
    <component>
        <recommendedName>
            <fullName>Cecropin-A</fullName>
        </recommendedName>
    </component>
    <component>
        <recommendedName>
            <fullName>Cecropin-A amidated isoform</fullName>
        </recommendedName>
    </component>
</protein>
<comment type="function">
    <text evidence="1">Antibacterial activity against several Gram-positive and Gram-negative bacteria. Antifungal activity against A.fumigatus, B.cinerea, F.culmorum, F.oxysporum, N.crassa, C.albicans, C.neoformans and S.cerevisiae.</text>
</comment>
<comment type="subcellular location">
    <subcellularLocation>
        <location>Secreted</location>
    </subcellularLocation>
</comment>
<comment type="tissue specificity">
    <text evidence="1">Relatively abundant in head, thorax and to a lesser extent in abdominal carcass and anterior midgut.</text>
</comment>
<comment type="developmental stage">
    <text evidence="1">In young pupae, expressed within 2 hours of infection and continued to accumulate over 16 hours.</text>
</comment>
<comment type="induction">
    <text>By bacterial infection.</text>
</comment>
<comment type="mass spectrometry">
    <molecule>Cecropin-A</molecule>
</comment>
<comment type="mass spectrometry">
    <molecule>Cecropin-A amidated isoform</molecule>
</comment>
<comment type="similarity">
    <text evidence="3">Belongs to the cecropin family.</text>
</comment>
<sequence>MNFSKIFIFVVLAVLLLCSQTEAGRLKKLGKKIEGAGKRVFKAAEKALPVVAGVKALG</sequence>
<gene>
    <name type="primary">CecA</name>
    <name type="synonym">CEC1</name>
    <name type="ORF">AGAP000693</name>
</gene>
<feature type="signal peptide" evidence="1">
    <location>
        <begin position="1"/>
        <end position="23"/>
    </location>
</feature>
<feature type="chain" id="PRO_0000004820" description="Cecropin-A">
    <location>
        <begin position="24"/>
        <end position="58"/>
    </location>
</feature>
<feature type="chain" id="PRO_0000004821" description="Cecropin-A amidated isoform">
    <location>
        <begin position="24"/>
        <end position="57"/>
    </location>
</feature>
<feature type="modified residue" description="Leucine amide" evidence="1">
    <location>
        <position position="57"/>
    </location>
</feature>
<feature type="sequence variant" description="In strain: GAM4B and GAM6B." evidence="2">
    <original>N</original>
    <variation>H</variation>
    <location>
        <position position="2"/>
    </location>
</feature>
<feature type="sequence variant" description="In strain: GAM4B." evidence="2">
    <original>I</original>
    <variation>F</variation>
    <location>
        <position position="8"/>
    </location>
</feature>
<feature type="sequence variant" description="In strain: GAM5A and GAM5B." evidence="2">
    <original>L</original>
    <variation>V</variation>
    <location>
        <position position="16"/>
    </location>
</feature>
<feature type="sequence variant" description="In strain: GAM2B and GAM8B." evidence="2">
    <original>Q</original>
    <variation>H</variation>
    <location>
        <position position="20"/>
    </location>
</feature>
<feature type="sequence variant" description="In strain: GAM12B." evidence="2">
    <original>E</original>
    <variation>D</variation>
    <location>
        <position position="34"/>
    </location>
</feature>
<name>CECA_ANOGA</name>
<reference key="1">
    <citation type="journal article" date="2000" name="Insect Mol. Biol.">
        <title>Cloning and analysis of a cecropin gene from the malaria vector mosquito, Anopheles gambiae.</title>
        <authorList>
            <person name="Vizioli J."/>
            <person name="Bulet P."/>
            <person name="Charlet M."/>
            <person name="Lowenberger C."/>
            <person name="Blass C."/>
            <person name="Mueller H.-M."/>
            <person name="Dimopoulos G.M."/>
            <person name="Hoffmann J."/>
            <person name="Kafatos F.C."/>
            <person name="Richman A."/>
        </authorList>
    </citation>
    <scope>NUCLEOTIDE SEQUENCE [MRNA]</scope>
    <scope>PROTEIN SEQUENCE OF 24-33</scope>
    <scope>FUNCTION</scope>
    <scope>TISSUE SPECIFICITY</scope>
    <scope>DEVELOPMENTAL STAGE</scope>
    <scope>MASS SPECTROMETRY</scope>
    <scope>AMIDATION AT LEU-57</scope>
    <source>
        <strain>G3</strain>
    </source>
</reference>
<reference key="2">
    <citation type="journal article" date="2002" name="Insect Mol. Biol.">
        <title>Genomic organization and regulation of three cecropin genes in Anopheles gambiae.</title>
        <authorList>
            <person name="Zheng X.-L."/>
            <person name="Zheng A.L."/>
        </authorList>
    </citation>
    <scope>NUCLEOTIDE SEQUENCE [GENOMIC DNA]</scope>
</reference>
<reference key="3">
    <citation type="journal article" date="2007" name="PLoS ONE">
        <title>Patterns of selection in anti-malarial immune genes in malaria vectors: evidence for adaptive evolution in LRIM1 in Anopheles arabiensis.</title>
        <authorList>
            <person name="Slotman M.A."/>
            <person name="Parmakelis A."/>
            <person name="Marshall J.C."/>
            <person name="Awono-Ambene P.H."/>
            <person name="Antonio-Nkondjo C."/>
            <person name="Simard F."/>
            <person name="Caccone A."/>
            <person name="Powell J.R."/>
        </authorList>
    </citation>
    <scope>NUCLEOTIDE SEQUENCE [GENOMIC DNA]</scope>
    <scope>VARIANTS HIS-2; PHE-8; VAL-16; HIS-20 AND ASP-34</scope>
    <source>
        <strain>GAM12A</strain>
        <strain>GAM12B</strain>
        <strain>GAM2A</strain>
        <strain>GAM2B</strain>
        <strain>GAM3A</strain>
        <strain>GAM3B</strain>
        <strain>GAM4A</strain>
        <strain>GAM4B</strain>
        <strain>GAM5</strain>
        <strain>GAM57B</strain>
        <strain>GAM59A</strain>
        <strain>GAM5A</strain>
        <strain>GAM60A</strain>
        <strain>GAM61</strain>
        <strain>GAM67B</strain>
        <strain>GAM6A</strain>
        <strain>GAM6B</strain>
        <strain>GAM70A</strain>
        <strain>GAM70B</strain>
        <strain>GAM73A</strain>
        <strain>GAM74B</strain>
        <strain>GAM8B</strain>
    </source>
</reference>
<reference key="4">
    <citation type="journal article" date="2002" name="Science">
        <title>The genome sequence of the malaria mosquito Anopheles gambiae.</title>
        <authorList>
            <person name="Holt R.A."/>
            <person name="Subramanian G.M."/>
            <person name="Halpern A."/>
            <person name="Sutton G.G."/>
            <person name="Charlab R."/>
            <person name="Nusskern D.R."/>
            <person name="Wincker P."/>
            <person name="Clark A.G."/>
            <person name="Ribeiro J.M.C."/>
            <person name="Wides R."/>
            <person name="Salzberg S.L."/>
            <person name="Loftus B.J."/>
            <person name="Yandell M.D."/>
            <person name="Majoros W.H."/>
            <person name="Rusch D.B."/>
            <person name="Lai Z."/>
            <person name="Kraft C.L."/>
            <person name="Abril J.F."/>
            <person name="Anthouard V."/>
            <person name="Arensburger P."/>
            <person name="Atkinson P.W."/>
            <person name="Baden H."/>
            <person name="de Berardinis V."/>
            <person name="Baldwin D."/>
            <person name="Benes V."/>
            <person name="Biedler J."/>
            <person name="Blass C."/>
            <person name="Bolanos R."/>
            <person name="Boscus D."/>
            <person name="Barnstead M."/>
            <person name="Cai S."/>
            <person name="Center A."/>
            <person name="Chaturverdi K."/>
            <person name="Christophides G.K."/>
            <person name="Chrystal M.A.M."/>
            <person name="Clamp M."/>
            <person name="Cravchik A."/>
            <person name="Curwen V."/>
            <person name="Dana A."/>
            <person name="Delcher A."/>
            <person name="Dew I."/>
            <person name="Evans C.A."/>
            <person name="Flanigan M."/>
            <person name="Grundschober-Freimoser A."/>
            <person name="Friedli L."/>
            <person name="Gu Z."/>
            <person name="Guan P."/>
            <person name="Guigo R."/>
            <person name="Hillenmeyer M.E."/>
            <person name="Hladun S.L."/>
            <person name="Hogan J.R."/>
            <person name="Hong Y.S."/>
            <person name="Hoover J."/>
            <person name="Jaillon O."/>
            <person name="Ke Z."/>
            <person name="Kodira C.D."/>
            <person name="Kokoza E."/>
            <person name="Koutsos A."/>
            <person name="Letunic I."/>
            <person name="Levitsky A.A."/>
            <person name="Liang Y."/>
            <person name="Lin J.-J."/>
            <person name="Lobo N.F."/>
            <person name="Lopez J.R."/>
            <person name="Malek J.A."/>
            <person name="McIntosh T.C."/>
            <person name="Meister S."/>
            <person name="Miller J.R."/>
            <person name="Mobarry C."/>
            <person name="Mongin E."/>
            <person name="Murphy S.D."/>
            <person name="O'Brochta D.A."/>
            <person name="Pfannkoch C."/>
            <person name="Qi R."/>
            <person name="Regier M.A."/>
            <person name="Remington K."/>
            <person name="Shao H."/>
            <person name="Sharakhova M.V."/>
            <person name="Sitter C.D."/>
            <person name="Shetty J."/>
            <person name="Smith T.J."/>
            <person name="Strong R."/>
            <person name="Sun J."/>
            <person name="Thomasova D."/>
            <person name="Ton L.Q."/>
            <person name="Topalis P."/>
            <person name="Tu Z.J."/>
            <person name="Unger M.F."/>
            <person name="Walenz B."/>
            <person name="Wang A.H."/>
            <person name="Wang J."/>
            <person name="Wang M."/>
            <person name="Wang X."/>
            <person name="Woodford K.J."/>
            <person name="Wortman J.R."/>
            <person name="Wu M."/>
            <person name="Yao A."/>
            <person name="Zdobnov E.M."/>
            <person name="Zhang H."/>
            <person name="Zhao Q."/>
            <person name="Zhao S."/>
            <person name="Zhu S.C."/>
            <person name="Zhimulev I."/>
            <person name="Coluzzi M."/>
            <person name="della Torre A."/>
            <person name="Roth C.W."/>
            <person name="Louis C."/>
            <person name="Kalush F."/>
            <person name="Mural R.J."/>
            <person name="Myers E.W."/>
            <person name="Adams M.D."/>
            <person name="Smith H.O."/>
            <person name="Broder S."/>
            <person name="Gardner M.J."/>
            <person name="Fraser C.M."/>
            <person name="Birney E."/>
            <person name="Bork P."/>
            <person name="Brey P.T."/>
            <person name="Venter J.C."/>
            <person name="Weissenbach J."/>
            <person name="Kafatos F.C."/>
            <person name="Collins F.H."/>
            <person name="Hoffman S.L."/>
        </authorList>
    </citation>
    <scope>NUCLEOTIDE SEQUENCE [LARGE SCALE GENOMIC DNA]</scope>
    <source>
        <strain>PEST</strain>
    </source>
</reference>
<accession>P82290</accession>
<accession>A7XAX5</accession>
<accession>A7XAX7</accession>
<accession>A7XAY1</accession>
<accession>A7XAY8</accession>
<accession>A7XAZ7</accession>
<accession>A7XB12</accession>
<accession>A7XB23</accession>
<accession>Q7QEE3</accession>
<keyword id="KW-0027">Amidation</keyword>
<keyword id="KW-0044">Antibiotic</keyword>
<keyword id="KW-0929">Antimicrobial</keyword>
<keyword id="KW-0903">Direct protein sequencing</keyword>
<keyword id="KW-0295">Fungicide</keyword>
<keyword id="KW-0391">Immunity</keyword>
<keyword id="KW-0399">Innate immunity</keyword>
<keyword id="KW-1185">Reference proteome</keyword>
<keyword id="KW-0964">Secreted</keyword>
<keyword id="KW-0732">Signal</keyword>
<proteinExistence type="evidence at protein level"/>
<evidence type="ECO:0000269" key="1">
    <source>
    </source>
</evidence>
<evidence type="ECO:0000269" key="2">
    <source>
    </source>
</evidence>
<evidence type="ECO:0000305" key="3"/>
<organism>
    <name type="scientific">Anopheles gambiae</name>
    <name type="common">African malaria mosquito</name>
    <dbReference type="NCBI Taxonomy" id="7165"/>
    <lineage>
        <taxon>Eukaryota</taxon>
        <taxon>Metazoa</taxon>
        <taxon>Ecdysozoa</taxon>
        <taxon>Arthropoda</taxon>
        <taxon>Hexapoda</taxon>
        <taxon>Insecta</taxon>
        <taxon>Pterygota</taxon>
        <taxon>Neoptera</taxon>
        <taxon>Endopterygota</taxon>
        <taxon>Diptera</taxon>
        <taxon>Nematocera</taxon>
        <taxon>Culicoidea</taxon>
        <taxon>Culicidae</taxon>
        <taxon>Anophelinae</taxon>
        <taxon>Anopheles</taxon>
    </lineage>
</organism>